<comment type="function">
    <text evidence="1 4 5 6">Catalyzes sulfur activation and mobilization in sulfur mobilization (SUF) pathway for iron-sulfur (Fe-S) cluster biogenesis (PubMed:24086138, PubMed:24709262). Active when in complex with a partner protein SufE (PubMed:24709262). Required for apicoplast maintenance (PubMed:37166116). Plays a role in the development of sporozoites in oocysts in mosquitoes (By similarity). May provide sulfur for MNMA-mediated tRNA modifications (PubMed:37166116).</text>
</comment>
<comment type="catalytic activity">
    <reaction evidence="5">
        <text>(sulfur carrier)-H + L-cysteine = (sulfur carrier)-SH + L-alanine</text>
        <dbReference type="Rhea" id="RHEA:43892"/>
        <dbReference type="Rhea" id="RHEA-COMP:14737"/>
        <dbReference type="Rhea" id="RHEA-COMP:14739"/>
        <dbReference type="ChEBI" id="CHEBI:29917"/>
        <dbReference type="ChEBI" id="CHEBI:35235"/>
        <dbReference type="ChEBI" id="CHEBI:57972"/>
        <dbReference type="ChEBI" id="CHEBI:64428"/>
        <dbReference type="EC" id="2.8.1.7"/>
    </reaction>
    <physiologicalReaction direction="left-to-right" evidence="10">
        <dbReference type="Rhea" id="RHEA:43893"/>
    </physiologicalReaction>
</comment>
<comment type="cofactor">
    <cofactor evidence="5">
        <name>pyridoxal 5'-phosphate</name>
        <dbReference type="ChEBI" id="CHEBI:597326"/>
    </cofactor>
</comment>
<comment type="pathway">
    <text evidence="10">Cofactor biosynthesis; iron-sulfur cluster biosynthesis.</text>
</comment>
<comment type="subunit">
    <text evidence="5">Monomer (PubMed:24709262). Interacts with SufE; interaction enhances cysteine desulfurase activity of SufS (PubMed:24709262).</text>
</comment>
<comment type="subcellular location">
    <subcellularLocation>
        <location evidence="4 5">Plastid</location>
        <location evidence="4 5">Apicoplast</location>
    </subcellularLocation>
</comment>
<comment type="PTM">
    <text evidence="4 5">Proteolytically cleaved.</text>
</comment>
<comment type="disruption phenotype">
    <text evidence="6">Parasites require exogenously provided mevalonate for survival (PubMed:37166116). Apicoplast structure is disrupted (PubMed:37166116).</text>
</comment>
<comment type="miscellaneous">
    <text evidence="5 8">Dose-dependent inhibition of catalytic activity by d-cycloserine (DCS) was observed in the presence of SufE (PubMed:24709262). Compounds related to DCS may therefore show antimalarial activity (PubMed:24709262).</text>
</comment>
<comment type="similarity">
    <text evidence="10">Belongs to the class-V pyridoxal-phosphate-dependent aminotransferase family. Csd subfamily.</text>
</comment>
<accession>Q8IBT4</accession>
<sequence>MLRGPRCLYIYLFFVFLPFSFCYIRNNDNRFVYIVKSIRKGPNIKLRLTKDEKPNIDNHIIDYFKNVREHFPFFKENKSLIYFDSAATTHKPSCVIEKMSEFYKKENSNIHRGIYKLSHNATNNYEKVRETIKEYINCEKNDNIIFTNGSTYGLNVVCKMMIEEIIKKEEDEIYLSYMEHHSNIIPWQEYINKEKKGRIKYVPLNKSGYINIKKLISNMNINTKVISICHASNVIGNIQNIEKIIKKIKNVYPHIIIIIDASQSFAHIKYDIKKMKKNKSCPDILITSGHKFCASLGTGFIFINKELSSKYKFKPLLYGSNIITNVSKYKSKFVTSLSELLETGTQNIPGILSMGISLEFFKKINWNYVYQYEMYLYDLFIYYMNKYMKNHFVQLPNLNLSYKKENINYKSHMQTHPPVHKYNDEQNFTNDHNITQSKQTKSIHSQHDTFKIYTHDTRKYGLKKIGILPLWSNTFSSFDLVTFLDFKNICIRAGHHCASLLHKYYLKVPDTSRISIYFYNTPQEIKYLAQQIASTSFMLNEMKNEK</sequence>
<reference evidence="12" key="1">
    <citation type="journal article" date="2002" name="Nature">
        <title>Genome sequence of the human malaria parasite Plasmodium falciparum.</title>
        <authorList>
            <person name="Gardner M.J."/>
            <person name="Hall N."/>
            <person name="Fung E."/>
            <person name="White O."/>
            <person name="Berriman M."/>
            <person name="Hyman R.W."/>
            <person name="Carlton J.M."/>
            <person name="Pain A."/>
            <person name="Nelson K.E."/>
            <person name="Bowman S."/>
            <person name="Paulsen I.T."/>
            <person name="James K.D."/>
            <person name="Eisen J.A."/>
            <person name="Rutherford K.M."/>
            <person name="Salzberg S.L."/>
            <person name="Craig A."/>
            <person name="Kyes S."/>
            <person name="Chan M.-S."/>
            <person name="Nene V."/>
            <person name="Shallom S.J."/>
            <person name="Suh B."/>
            <person name="Peterson J."/>
            <person name="Angiuoli S."/>
            <person name="Pertea M."/>
            <person name="Allen J."/>
            <person name="Selengut J."/>
            <person name="Haft D."/>
            <person name="Mather M.W."/>
            <person name="Vaidya A.B."/>
            <person name="Martin D.M.A."/>
            <person name="Fairlamb A.H."/>
            <person name="Fraunholz M.J."/>
            <person name="Roos D.S."/>
            <person name="Ralph S.A."/>
            <person name="McFadden G.I."/>
            <person name="Cummings L.M."/>
            <person name="Subramanian G.M."/>
            <person name="Mungall C."/>
            <person name="Venter J.C."/>
            <person name="Carucci D.J."/>
            <person name="Hoffman S.L."/>
            <person name="Newbold C."/>
            <person name="Davis R.W."/>
            <person name="Fraser C.M."/>
            <person name="Barrell B.G."/>
        </authorList>
    </citation>
    <scope>NUCLEOTIDE SEQUENCE [LARGE SCALE GENOMIC DNA]</scope>
    <source>
        <strain evidence="12">3D7</strain>
    </source>
</reference>
<reference evidence="12" key="2">
    <citation type="journal article" date="2002" name="Nature">
        <title>Sequence of Plasmodium falciparum chromosomes 1, 3-9 and 13.</title>
        <authorList>
            <person name="Hall N."/>
            <person name="Pain A."/>
            <person name="Berriman M."/>
            <person name="Churcher C.M."/>
            <person name="Harris B."/>
            <person name="Harris D."/>
            <person name="Mungall K.L."/>
            <person name="Bowman S."/>
            <person name="Atkin R."/>
            <person name="Baker S."/>
            <person name="Barron A."/>
            <person name="Brooks K."/>
            <person name="Buckee C.O."/>
            <person name="Burrows C."/>
            <person name="Cherevach I."/>
            <person name="Chillingworth C."/>
            <person name="Chillingworth T."/>
            <person name="Christodoulou Z."/>
            <person name="Clark L."/>
            <person name="Clark R."/>
            <person name="Corton C."/>
            <person name="Cronin A."/>
            <person name="Davies R.M."/>
            <person name="Davis P."/>
            <person name="Dear P."/>
            <person name="Dearden F."/>
            <person name="Doggett J."/>
            <person name="Feltwell T."/>
            <person name="Goble A."/>
            <person name="Goodhead I."/>
            <person name="Gwilliam R."/>
            <person name="Hamlin N."/>
            <person name="Hance Z."/>
            <person name="Harper D."/>
            <person name="Hauser H."/>
            <person name="Hornsby T."/>
            <person name="Holroyd S."/>
            <person name="Horrocks P."/>
            <person name="Humphray S."/>
            <person name="Jagels K."/>
            <person name="James K.D."/>
            <person name="Johnson D."/>
            <person name="Kerhornou A."/>
            <person name="Knights A."/>
            <person name="Konfortov B."/>
            <person name="Kyes S."/>
            <person name="Larke N."/>
            <person name="Lawson D."/>
            <person name="Lennard N."/>
            <person name="Line A."/>
            <person name="Maddison M."/>
            <person name="Mclean J."/>
            <person name="Mooney P."/>
            <person name="Moule S."/>
            <person name="Murphy L."/>
            <person name="Oliver K."/>
            <person name="Ormond D."/>
            <person name="Price C."/>
            <person name="Quail M.A."/>
            <person name="Rabbinowitsch E."/>
            <person name="Rajandream M.A."/>
            <person name="Rutter S."/>
            <person name="Rutherford K.M."/>
            <person name="Sanders M."/>
            <person name="Simmonds M."/>
            <person name="Seeger K."/>
            <person name="Sharp S."/>
            <person name="Smith R."/>
            <person name="Squares R."/>
            <person name="Squares S."/>
            <person name="Stevens K."/>
            <person name="Taylor K."/>
            <person name="Tivey A."/>
            <person name="Unwin L."/>
            <person name="Whitehead S."/>
            <person name="Woodward J.R."/>
            <person name="Sulston J.E."/>
            <person name="Craig A."/>
            <person name="Newbold C."/>
            <person name="Barrell B.G."/>
        </authorList>
    </citation>
    <scope>NUCLEOTIDE SEQUENCE [LARGE SCALE GENOMIC DNA]</scope>
    <source>
        <strain evidence="12">3D7</strain>
    </source>
</reference>
<reference evidence="10" key="3">
    <citation type="journal article" date="2013" name="PLoS Pathog.">
        <title>The suf iron-sulfur cluster synthesis pathway is required for apicoplast maintenance in malaria parasites.</title>
        <authorList>
            <person name="Gisselberg J.E."/>
            <person name="Dellibovi-Ragheb T.A."/>
            <person name="Matthews K.A."/>
            <person name="Bosch G."/>
            <person name="Prigge S.T."/>
        </authorList>
    </citation>
    <scope>FUNCTION</scope>
    <scope>SUBCELLULAR LOCATION</scope>
    <scope>PROTEOLYTIC CLEAVAGE</scope>
    <source>
        <strain evidence="7">Dd2</strain>
    </source>
</reference>
<reference evidence="10" key="4">
    <citation type="journal article" date="2014" name="Antimicrob. Agents Chemother.">
        <title>Sulfur mobilization for Fe-S cluster assembly by the essential SUF pathway in the Plasmodium falciparum apicoplast and its inhibition.</title>
        <authorList>
            <person name="Charan M."/>
            <person name="Singh N."/>
            <person name="Kumar B."/>
            <person name="Srivastava K."/>
            <person name="Siddiqi M.I."/>
            <person name="Habib S."/>
        </authorList>
    </citation>
    <scope>FUNCTION</scope>
    <scope>CATALYTIC ACTIVITY</scope>
    <scope>COFACTOR</scope>
    <scope>SUBUNIT</scope>
    <scope>INTERACTION WITH SUFE</scope>
    <scope>SUBCELLULAR LOCATION</scope>
    <scope>PROTEOLYTIC CLEAVAGE</scope>
    <scope>MISCELLANEOUS</scope>
    <scope>MUTAGENESIS OF CYS-497</scope>
    <source>
        <strain evidence="8">3D7</strain>
    </source>
</reference>
<reference evidence="10" key="5">
    <citation type="journal article" date="2023" name="Elife">
        <title>The Plasmodium falciparum apicoplast cysteine desulfurase provides sulfur for both iron-sulfur cluster assembly and tRNA modification.</title>
        <authorList>
            <person name="Swift R.P."/>
            <person name="Elahi R."/>
            <person name="Rajaram K."/>
            <person name="Liu H.B."/>
            <person name="Prigge S.T."/>
        </authorList>
    </citation>
    <scope>FUNCTION</scope>
    <scope>DISRUPTION PHENOTYPE</scope>
    <source>
        <strain evidence="9">NF54</strain>
    </source>
</reference>
<protein>
    <recommendedName>
        <fullName evidence="7 8">Cysteine desulfurase SufS</fullName>
        <shortName evidence="8">PfSufS</shortName>
        <ecNumber evidence="5">2.8.1.7</ecNumber>
    </recommendedName>
</protein>
<organism evidence="12">
    <name type="scientific">Plasmodium falciparum (isolate 3D7)</name>
    <dbReference type="NCBI Taxonomy" id="36329"/>
    <lineage>
        <taxon>Eukaryota</taxon>
        <taxon>Sar</taxon>
        <taxon>Alveolata</taxon>
        <taxon>Apicomplexa</taxon>
        <taxon>Aconoidasida</taxon>
        <taxon>Haemosporida</taxon>
        <taxon>Plasmodiidae</taxon>
        <taxon>Plasmodium</taxon>
        <taxon>Plasmodium (Laverania)</taxon>
    </lineage>
</organism>
<proteinExistence type="evidence at protein level"/>
<gene>
    <name evidence="7 8 9" type="primary">SufS</name>
    <name evidence="11" type="ORF">PF3D7_0716600</name>
</gene>
<keyword id="KW-0933">Apicoplast</keyword>
<keyword id="KW-0934">Plastid</keyword>
<keyword id="KW-0663">Pyridoxal phosphate</keyword>
<keyword id="KW-1185">Reference proteome</keyword>
<keyword id="KW-0732">Signal</keyword>
<keyword id="KW-0808">Transferase</keyword>
<evidence type="ECO:0000250" key="1">
    <source>
        <dbReference type="UniProtKB" id="A0A509AF62"/>
    </source>
</evidence>
<evidence type="ECO:0000250" key="2">
    <source>
        <dbReference type="UniProtKB" id="O32164"/>
    </source>
</evidence>
<evidence type="ECO:0000255" key="3"/>
<evidence type="ECO:0000269" key="4">
    <source>
    </source>
</evidence>
<evidence type="ECO:0000269" key="5">
    <source>
    </source>
</evidence>
<evidence type="ECO:0000269" key="6">
    <source>
    </source>
</evidence>
<evidence type="ECO:0000303" key="7">
    <source>
    </source>
</evidence>
<evidence type="ECO:0000303" key="8">
    <source>
    </source>
</evidence>
<evidence type="ECO:0000303" key="9">
    <source>
    </source>
</evidence>
<evidence type="ECO:0000305" key="10"/>
<evidence type="ECO:0000312" key="11">
    <source>
        <dbReference type="EMBL" id="CAD50914.1"/>
    </source>
</evidence>
<evidence type="ECO:0000312" key="12">
    <source>
        <dbReference type="Proteomes" id="UP000001450"/>
    </source>
</evidence>
<name>SUFS_PLAF7</name>
<feature type="signal peptide" evidence="3">
    <location>
        <begin position="1"/>
        <end position="22"/>
    </location>
</feature>
<feature type="chain" id="PRO_0000459466" description="Cysteine desulfurase SufS">
    <location>
        <begin position="23"/>
        <end position="546"/>
    </location>
</feature>
<feature type="active site" description="Cysteine persulfide intermediate" evidence="2">
    <location>
        <position position="497"/>
    </location>
</feature>
<feature type="modified residue" description="N6-(pyridoxal phosphate)lysine" evidence="2">
    <location>
        <position position="291"/>
    </location>
</feature>
<feature type="mutagenesis site" description="Abolishes desulfurase activity." evidence="5">
    <original>C</original>
    <variation>A</variation>
    <location>
        <position position="497"/>
    </location>
</feature>
<dbReference type="EC" id="2.8.1.7" evidence="5"/>
<dbReference type="EMBL" id="AL844506">
    <property type="protein sequence ID" value="CAD50914.1"/>
    <property type="molecule type" value="Genomic_DNA"/>
</dbReference>
<dbReference type="RefSeq" id="XP_001349069.1">
    <property type="nucleotide sequence ID" value="XM_001349033.1"/>
</dbReference>
<dbReference type="SMR" id="Q8IBT4"/>
<dbReference type="FunCoup" id="Q8IBT4">
    <property type="interactions" value="14"/>
</dbReference>
<dbReference type="STRING" id="36329.Q8IBT4"/>
<dbReference type="PaxDb" id="5833-PF07_0068"/>
<dbReference type="EnsemblProtists" id="CAD50914">
    <property type="protein sequence ID" value="CAD50914"/>
    <property type="gene ID" value="PF3D7_0716600"/>
</dbReference>
<dbReference type="GeneID" id="2655112"/>
<dbReference type="KEGG" id="pfa:PF3D7_0716600"/>
<dbReference type="VEuPathDB" id="PlasmoDB:PF3D7_0716600"/>
<dbReference type="HOGENOM" id="CLU_003433_2_5_1"/>
<dbReference type="InParanoid" id="Q8IBT4"/>
<dbReference type="OMA" id="LVTWQQI"/>
<dbReference type="OrthoDB" id="420046at2759"/>
<dbReference type="PhylomeDB" id="Q8IBT4"/>
<dbReference type="UniPathway" id="UPA00266"/>
<dbReference type="Proteomes" id="UP000001450">
    <property type="component" value="Chromosome 7"/>
</dbReference>
<dbReference type="GO" id="GO:0020011">
    <property type="term" value="C:apicoplast"/>
    <property type="evidence" value="ECO:0000314"/>
    <property type="project" value="GeneDB"/>
</dbReference>
<dbReference type="GO" id="GO:0031071">
    <property type="term" value="F:cysteine desulfurase activity"/>
    <property type="evidence" value="ECO:0000316"/>
    <property type="project" value="GeneDB"/>
</dbReference>
<dbReference type="GO" id="GO:0006534">
    <property type="term" value="P:cysteine metabolic process"/>
    <property type="evidence" value="ECO:0000314"/>
    <property type="project" value="GeneDB"/>
</dbReference>
<dbReference type="FunFam" id="3.40.640.10:FF:000166">
    <property type="entry name" value="Cysteine desulfurase"/>
    <property type="match status" value="1"/>
</dbReference>
<dbReference type="FunFam" id="3.90.1150.10:FF:000202">
    <property type="entry name" value="Cysteine desulfurase"/>
    <property type="match status" value="1"/>
</dbReference>
<dbReference type="Gene3D" id="3.90.1150.10">
    <property type="entry name" value="Aspartate Aminotransferase, domain 1"/>
    <property type="match status" value="2"/>
</dbReference>
<dbReference type="Gene3D" id="3.40.640.10">
    <property type="entry name" value="Type I PLP-dependent aspartate aminotransferase-like (Major domain)"/>
    <property type="match status" value="1"/>
</dbReference>
<dbReference type="InterPro" id="IPR000192">
    <property type="entry name" value="Aminotrans_V_dom"/>
</dbReference>
<dbReference type="InterPro" id="IPR015424">
    <property type="entry name" value="PyrdxlP-dep_Trfase"/>
</dbReference>
<dbReference type="InterPro" id="IPR015421">
    <property type="entry name" value="PyrdxlP-dep_Trfase_major"/>
</dbReference>
<dbReference type="InterPro" id="IPR015422">
    <property type="entry name" value="PyrdxlP-dep_Trfase_small"/>
</dbReference>
<dbReference type="PANTHER" id="PTHR43586">
    <property type="entry name" value="CYSTEINE DESULFURASE"/>
    <property type="match status" value="1"/>
</dbReference>
<dbReference type="PANTHER" id="PTHR43586:SF8">
    <property type="entry name" value="CYSTEINE DESULFURASE 1, CHLOROPLASTIC"/>
    <property type="match status" value="1"/>
</dbReference>
<dbReference type="Pfam" id="PF00266">
    <property type="entry name" value="Aminotran_5"/>
    <property type="match status" value="2"/>
</dbReference>
<dbReference type="SUPFAM" id="SSF53383">
    <property type="entry name" value="PLP-dependent transferases"/>
    <property type="match status" value="1"/>
</dbReference>